<dbReference type="EMBL" id="U00096">
    <property type="protein sequence ID" value="AAC74454.2"/>
    <property type="molecule type" value="Genomic_DNA"/>
</dbReference>
<dbReference type="EMBL" id="AP009048">
    <property type="protein sequence ID" value="BAA14966.1"/>
    <property type="molecule type" value="Genomic_DNA"/>
</dbReference>
<dbReference type="PIR" id="G64887">
    <property type="entry name" value="G64887"/>
</dbReference>
<dbReference type="RefSeq" id="NP_415890.2">
    <property type="nucleotide sequence ID" value="NC_000913.3"/>
</dbReference>
<dbReference type="RefSeq" id="WP_000279097.1">
    <property type="nucleotide sequence ID" value="NZ_JACEFP010000076.1"/>
</dbReference>
<dbReference type="SMR" id="P76072"/>
<dbReference type="BioGRID" id="4260171">
    <property type="interactions" value="152"/>
</dbReference>
<dbReference type="BioGRID" id="849592">
    <property type="interactions" value="2"/>
</dbReference>
<dbReference type="DIP" id="DIP-10932N"/>
<dbReference type="FunCoup" id="P76072">
    <property type="interactions" value="261"/>
</dbReference>
<dbReference type="IntAct" id="P76072">
    <property type="interactions" value="17"/>
</dbReference>
<dbReference type="STRING" id="511145.b1372"/>
<dbReference type="PaxDb" id="511145-b1372"/>
<dbReference type="EnsemblBacteria" id="AAC74454">
    <property type="protein sequence ID" value="AAC74454"/>
    <property type="gene ID" value="b1372"/>
</dbReference>
<dbReference type="GeneID" id="945207"/>
<dbReference type="KEGG" id="ecj:JW1366"/>
<dbReference type="KEGG" id="eco:b1372"/>
<dbReference type="PATRIC" id="fig|511145.12.peg.1433"/>
<dbReference type="EchoBASE" id="EB3152"/>
<dbReference type="eggNOG" id="COG5301">
    <property type="taxonomic scope" value="Bacteria"/>
</dbReference>
<dbReference type="HOGENOM" id="CLU_008928_4_2_6"/>
<dbReference type="InParanoid" id="P76072"/>
<dbReference type="OMA" id="TECINAR"/>
<dbReference type="OrthoDB" id="9810174at2"/>
<dbReference type="BioCyc" id="EcoCyc:G6695-MONOMER"/>
<dbReference type="PRO" id="PR:P76072"/>
<dbReference type="Proteomes" id="UP000000625">
    <property type="component" value="Chromosome"/>
</dbReference>
<dbReference type="GO" id="GO:0005198">
    <property type="term" value="F:structural molecule activity"/>
    <property type="evidence" value="ECO:0007669"/>
    <property type="project" value="InterPro"/>
</dbReference>
<dbReference type="Gene3D" id="2.60.40.1120">
    <property type="entry name" value="Carboxypeptidase-like, regulatory domain"/>
    <property type="match status" value="1"/>
</dbReference>
<dbReference type="Gene3D" id="3.90.1340.10">
    <property type="entry name" value="Phage tail collar domain"/>
    <property type="match status" value="1"/>
</dbReference>
<dbReference type="InterPro" id="IPR008969">
    <property type="entry name" value="CarboxyPept-like_regulatory"/>
</dbReference>
<dbReference type="InterPro" id="IPR048390">
    <property type="entry name" value="Gp34_trimer"/>
</dbReference>
<dbReference type="InterPro" id="IPR005003">
    <property type="entry name" value="Phage_lambda_Stf-r1"/>
</dbReference>
<dbReference type="InterPro" id="IPR011083">
    <property type="entry name" value="Phage_tail_collar_dom"/>
</dbReference>
<dbReference type="InterPro" id="IPR037053">
    <property type="entry name" value="Phage_tail_collar_dom_sf"/>
</dbReference>
<dbReference type="InterPro" id="IPR051934">
    <property type="entry name" value="Phage_Tail_Fiber_Structural"/>
</dbReference>
<dbReference type="InterPro" id="IPR013609">
    <property type="entry name" value="Stf-like_N"/>
</dbReference>
<dbReference type="PANTHER" id="PTHR35191">
    <property type="entry name" value="PROPHAGE SIDE TAIL FIBER PROTEIN HOMOLOG STFQ-RELATED"/>
    <property type="match status" value="1"/>
</dbReference>
<dbReference type="PANTHER" id="PTHR35191:SF1">
    <property type="entry name" value="PROPHAGE SIDE TAIL FIBER PROTEIN HOMOLOG STFQ-RELATED"/>
    <property type="match status" value="1"/>
</dbReference>
<dbReference type="Pfam" id="PF07484">
    <property type="entry name" value="Collar"/>
    <property type="match status" value="1"/>
</dbReference>
<dbReference type="Pfam" id="PF21446">
    <property type="entry name" value="Gp34_trimer"/>
    <property type="match status" value="1"/>
</dbReference>
<dbReference type="Pfam" id="PF03335">
    <property type="entry name" value="Phage_fiber"/>
    <property type="match status" value="6"/>
</dbReference>
<dbReference type="Pfam" id="PF08400">
    <property type="entry name" value="phage_tail_N"/>
    <property type="match status" value="1"/>
</dbReference>
<dbReference type="SUPFAM" id="SSF49464">
    <property type="entry name" value="Carboxypeptidase regulatory domain-like"/>
    <property type="match status" value="1"/>
</dbReference>
<dbReference type="SUPFAM" id="SSF88874">
    <property type="entry name" value="Receptor-binding domain of short tail fibre protein gp12"/>
    <property type="match status" value="1"/>
</dbReference>
<sequence>MAVKISGVLKDGTGKPVQNCTIQLKAKRNSTTVVVNTLASENPDEAGRYSMDVEYGQYSVILLVEGFPPSHAGTITVYEDSQPGTLNDFLGAMTEDDARPEALRRFELMVEEVARNASAVAQNTAAAKKSASDASTSAREAATHAADAADSARAASTSAGQAASSAQSASSSAGTASTKATEASKSAAAAESSKSAAATSAGAAKTSETNASASLQSAATSASTATTKASEAATSARDAAASKEAAKSSETNASSSASSAASSATAAGNSAKAAKTSETNARSSETAAGQSASAAAGSKTAAASSASAASTSAGQASASATAAGKSAESAASSASTATTKAGEATEQASAAARSASAAKTSETNAKASETSAESSKTAAASSASSAASSASSASASKDEATRQASAAKSSATTASTKATEAAGSATAAAQSKSTAESAATRAETAAKRAEDIASAVALEDASTTKKGIVQLSSATNSTSETLAATPKAVKSAYDNAEKRLQKDQNGADIPDKGCFLNNINAVSKTDFADKRGMRYVRVNAPAGATSGKYYPVVVMRSAGSVSELASRVIITTATRTAGDPMNNCEFNGFVMPGGWTDRGRYAYGMFWQYQNNERAIHSIMMSNKGDDLRSVFYVDGAAFPVFAFIEDGLSISAPGADLVVNDTTYKFGATNPATECIAADVILDFKSGRGFYESHSLIVNDNLSCKKLFATDEIVARGGNQIRMIGGEYGALWRNDGAKTYLLLTNQGDVYGGWNTLRPFAIDNATGELVIGTKLSASLNGNALTATKLQTPRRVSGVEFDGSKDITLTAAHVAAFARRATDTYADADGGVPWNAESGAYNVTRSGDSYILVNFYTGVGSCRTLQMKAHYRNGGLFYRSSRDGYGFEEDWAEVYTSKNLPPESYPVGAPIPWPSDTVPSGYALMQGQAFDKSAYPKLAAAYPSGVIPDMRGWTIKGKPASGRAVLSQEQDGIKSHTHSASASSTDLGTKTTSSFDYGTKSTNNTGAHTHSVSGSTNSAGAHTHSLANVNTASANSGAGSASTRLSVVHNQNYATSSAGAHTHSLSGTAASAGAHAHTVGIGAHTHSVAIGSHGHTITVNAAGNAENTVKNIAFNYIVRLA</sequence>
<proteinExistence type="inferred from homology"/>
<keyword id="KW-1185">Reference proteome</keyword>
<keyword id="KW-0677">Repeat</keyword>
<accession>P76072</accession>
<accession>P77560</accession>
<name>STFR_ECOLI</name>
<protein>
    <recommendedName>
        <fullName evidence="2">Prophage side tail fiber protein homolog StfR</fullName>
    </recommendedName>
    <alternativeName>
        <fullName>Side tail fiber protein homolog from lambdoid prophage Rac</fullName>
    </alternativeName>
</protein>
<evidence type="ECO:0000256" key="1">
    <source>
        <dbReference type="SAM" id="MobiDB-lite"/>
    </source>
</evidence>
<evidence type="ECO:0000305" key="2"/>
<gene>
    <name type="primary">stfR</name>
    <name type="synonym">ynaB</name>
    <name type="ordered locus">b1372</name>
    <name type="ordered locus">JW1366</name>
</gene>
<feature type="chain" id="PRO_0000077743" description="Prophage side tail fiber protein homolog StfR">
    <location>
        <begin position="1"/>
        <end position="1120"/>
    </location>
</feature>
<feature type="region of interest" description="Disordered" evidence="1">
    <location>
        <begin position="129"/>
        <end position="154"/>
    </location>
</feature>
<feature type="region of interest" description="Disordered" evidence="1">
    <location>
        <begin position="221"/>
        <end position="442"/>
    </location>
</feature>
<feature type="region of interest" description="Disordered" evidence="1">
    <location>
        <begin position="960"/>
        <end position="1021"/>
    </location>
</feature>
<feature type="compositionally biased region" description="Low complexity" evidence="1">
    <location>
        <begin position="221"/>
        <end position="239"/>
    </location>
</feature>
<feature type="compositionally biased region" description="Low complexity" evidence="1">
    <location>
        <begin position="248"/>
        <end position="395"/>
    </location>
</feature>
<feature type="compositionally biased region" description="Low complexity" evidence="1">
    <location>
        <begin position="402"/>
        <end position="442"/>
    </location>
</feature>
<feature type="compositionally biased region" description="Polar residues" evidence="1">
    <location>
        <begin position="985"/>
        <end position="1021"/>
    </location>
</feature>
<reference key="1">
    <citation type="journal article" date="1996" name="DNA Res.">
        <title>A 570-kb DNA sequence of the Escherichia coli K-12 genome corresponding to the 28.0-40.1 min region on the linkage map.</title>
        <authorList>
            <person name="Aiba H."/>
            <person name="Baba T."/>
            <person name="Fujita K."/>
            <person name="Hayashi K."/>
            <person name="Inada T."/>
            <person name="Isono K."/>
            <person name="Itoh T."/>
            <person name="Kasai H."/>
            <person name="Kashimoto K."/>
            <person name="Kimura S."/>
            <person name="Kitakawa M."/>
            <person name="Kitagawa M."/>
            <person name="Makino K."/>
            <person name="Miki T."/>
            <person name="Mizobuchi K."/>
            <person name="Mori H."/>
            <person name="Mori T."/>
            <person name="Motomura K."/>
            <person name="Nakade S."/>
            <person name="Nakamura Y."/>
            <person name="Nashimoto H."/>
            <person name="Nishio Y."/>
            <person name="Oshima T."/>
            <person name="Saito N."/>
            <person name="Sampei G."/>
            <person name="Seki Y."/>
            <person name="Sivasundaram S."/>
            <person name="Tagami H."/>
            <person name="Takeda J."/>
            <person name="Takemoto K."/>
            <person name="Takeuchi Y."/>
            <person name="Wada C."/>
            <person name="Yamamoto Y."/>
            <person name="Horiuchi T."/>
        </authorList>
    </citation>
    <scope>NUCLEOTIDE SEQUENCE [LARGE SCALE GENOMIC DNA]</scope>
    <source>
        <strain>K12 / W3110 / ATCC 27325 / DSM 5911</strain>
    </source>
</reference>
<reference key="2">
    <citation type="journal article" date="1997" name="Science">
        <title>The complete genome sequence of Escherichia coli K-12.</title>
        <authorList>
            <person name="Blattner F.R."/>
            <person name="Plunkett G. III"/>
            <person name="Bloch C.A."/>
            <person name="Perna N.T."/>
            <person name="Burland V."/>
            <person name="Riley M."/>
            <person name="Collado-Vides J."/>
            <person name="Glasner J.D."/>
            <person name="Rode C.K."/>
            <person name="Mayhew G.F."/>
            <person name="Gregor J."/>
            <person name="Davis N.W."/>
            <person name="Kirkpatrick H.A."/>
            <person name="Goeden M.A."/>
            <person name="Rose D.J."/>
            <person name="Mau B."/>
            <person name="Shao Y."/>
        </authorList>
    </citation>
    <scope>NUCLEOTIDE SEQUENCE [LARGE SCALE GENOMIC DNA]</scope>
    <source>
        <strain>K12 / MG1655 / ATCC 47076</strain>
    </source>
</reference>
<reference key="3">
    <citation type="journal article" date="2006" name="Mol. Syst. Biol.">
        <title>Highly accurate genome sequences of Escherichia coli K-12 strains MG1655 and W3110.</title>
        <authorList>
            <person name="Hayashi K."/>
            <person name="Morooka N."/>
            <person name="Yamamoto Y."/>
            <person name="Fujita K."/>
            <person name="Isono K."/>
            <person name="Choi S."/>
            <person name="Ohtsubo E."/>
            <person name="Baba T."/>
            <person name="Wanner B.L."/>
            <person name="Mori H."/>
            <person name="Horiuchi T."/>
        </authorList>
    </citation>
    <scope>NUCLEOTIDE SEQUENCE [LARGE SCALE GENOMIC DNA]</scope>
    <source>
        <strain>K12 / W3110 / ATCC 27325 / DSM 5911</strain>
    </source>
</reference>
<organism>
    <name type="scientific">Escherichia coli (strain K12)</name>
    <dbReference type="NCBI Taxonomy" id="83333"/>
    <lineage>
        <taxon>Bacteria</taxon>
        <taxon>Pseudomonadati</taxon>
        <taxon>Pseudomonadota</taxon>
        <taxon>Gammaproteobacteria</taxon>
        <taxon>Enterobacterales</taxon>
        <taxon>Enterobacteriaceae</taxon>
        <taxon>Escherichia</taxon>
    </lineage>
</organism>
<comment type="similarity">
    <text evidence="2">Belongs to the tail fiber family.</text>
</comment>